<gene>
    <name evidence="1" type="primary">mutL</name>
    <name type="ordered locus">EUBREC_1749</name>
</gene>
<reference key="1">
    <citation type="journal article" date="2009" name="Proc. Natl. Acad. Sci. U.S.A.">
        <title>Characterizing a model human gut microbiota composed of members of its two dominant bacterial phyla.</title>
        <authorList>
            <person name="Mahowald M.A."/>
            <person name="Rey F.E."/>
            <person name="Seedorf H."/>
            <person name="Turnbaugh P.J."/>
            <person name="Fulton R.S."/>
            <person name="Wollam A."/>
            <person name="Shah N."/>
            <person name="Wang C."/>
            <person name="Magrini V."/>
            <person name="Wilson R.K."/>
            <person name="Cantarel B.L."/>
            <person name="Coutinho P.M."/>
            <person name="Henrissat B."/>
            <person name="Crock L.W."/>
            <person name="Russell A."/>
            <person name="Verberkmoes N.C."/>
            <person name="Hettich R.L."/>
            <person name="Gordon J.I."/>
        </authorList>
    </citation>
    <scope>NUCLEOTIDE SEQUENCE [LARGE SCALE GENOMIC DNA]</scope>
    <source>
        <strain>ATCC 33656 / DSM 3377 / JCM 17463 / KCTC 5835 / LMG 30912 / VPI 0990</strain>
    </source>
</reference>
<comment type="function">
    <text evidence="1">This protein is involved in the repair of mismatches in DNA. It is required for dam-dependent methyl-directed DNA mismatch repair. May act as a 'molecular matchmaker', a protein that promotes the formation of a stable complex between two or more DNA-binding proteins in an ATP-dependent manner without itself being part of a final effector complex.</text>
</comment>
<comment type="similarity">
    <text evidence="1">Belongs to the DNA mismatch repair MutL/HexB family.</text>
</comment>
<sequence>MPNIAILNQETIDKIAAGEVVERPCSVVKELVENAIDAGSTAITVEIKEGGISFIRITDNGCGIERDQVAVAFYRHSTSKIRSAEDLLTVKSLGFRGEALSSISAVARVELITKTYDELTGTRYVIEGSKELSNEEIGAPDGTTFIVKDLFYNVPARRKFLKTAQTEGSYISDMVEKLALSHPDISFKFINNNQTKLHTSGNGNRKDIIYHIFGREISSSLLEVKHECEYFKVEGFIGKPVITRGNRNYENYFINGRYVKSNILSRAIEEAYKSFLMQHQYPFTVLYFTFFSELDVNVHPTKMELRFDNNNEIYVELCDTIYAILAHKEMIPEVPVDSTPAPKKIVHEYKEPIPEPFEKRRINEVRAAESRSVYGQSVTATVKSSTVKGPAVNEPLTENTLNQQKVKTSASTPVVHTGNSVEPKPETSTAYEPAHVVTGTQQTLGDYDKVFLTESAKKQFSIIGQLFKTYWLIEFEDKLYIIDQHAAHEKVLYEKTMARLANKDFTSQRISPPIVMTLDARECEMLEKYRPQIEQFGYEVEHFGGKEYMISAIPDNLFNIDMKDLFIEMLDDFSNATGRQTPDIITEKVASMSCKAAVKGNDKLTLPEINKLIDELLSLDNPYNCPHGRPTIISMSKYEIEKKFKRIV</sequence>
<name>MUTL_AGARV</name>
<proteinExistence type="inferred from homology"/>
<accession>C4ZA52</accession>
<feature type="chain" id="PRO_1000203386" description="DNA mismatch repair protein MutL">
    <location>
        <begin position="1"/>
        <end position="648"/>
    </location>
</feature>
<feature type="region of interest" description="Disordered" evidence="2">
    <location>
        <begin position="385"/>
        <end position="430"/>
    </location>
</feature>
<feature type="compositionally biased region" description="Polar residues" evidence="2">
    <location>
        <begin position="396"/>
        <end position="430"/>
    </location>
</feature>
<dbReference type="EMBL" id="CP001107">
    <property type="protein sequence ID" value="ACR75493.1"/>
    <property type="molecule type" value="Genomic_DNA"/>
</dbReference>
<dbReference type="RefSeq" id="WP_012742591.1">
    <property type="nucleotide sequence ID" value="NC_012781.1"/>
</dbReference>
<dbReference type="SMR" id="C4ZA52"/>
<dbReference type="STRING" id="515619.EUBREC_1749"/>
<dbReference type="PaxDb" id="515619-EUBREC_1749"/>
<dbReference type="GeneID" id="86988548"/>
<dbReference type="KEGG" id="ere:EUBREC_1749"/>
<dbReference type="HOGENOM" id="CLU_004131_4_1_9"/>
<dbReference type="Proteomes" id="UP000001477">
    <property type="component" value="Chromosome"/>
</dbReference>
<dbReference type="GO" id="GO:0032300">
    <property type="term" value="C:mismatch repair complex"/>
    <property type="evidence" value="ECO:0007669"/>
    <property type="project" value="InterPro"/>
</dbReference>
<dbReference type="GO" id="GO:0005524">
    <property type="term" value="F:ATP binding"/>
    <property type="evidence" value="ECO:0007669"/>
    <property type="project" value="InterPro"/>
</dbReference>
<dbReference type="GO" id="GO:0016887">
    <property type="term" value="F:ATP hydrolysis activity"/>
    <property type="evidence" value="ECO:0007669"/>
    <property type="project" value="InterPro"/>
</dbReference>
<dbReference type="GO" id="GO:0140664">
    <property type="term" value="F:ATP-dependent DNA damage sensor activity"/>
    <property type="evidence" value="ECO:0007669"/>
    <property type="project" value="InterPro"/>
</dbReference>
<dbReference type="GO" id="GO:0030983">
    <property type="term" value="F:mismatched DNA binding"/>
    <property type="evidence" value="ECO:0007669"/>
    <property type="project" value="InterPro"/>
</dbReference>
<dbReference type="GO" id="GO:0006298">
    <property type="term" value="P:mismatch repair"/>
    <property type="evidence" value="ECO:0007669"/>
    <property type="project" value="UniProtKB-UniRule"/>
</dbReference>
<dbReference type="CDD" id="cd16926">
    <property type="entry name" value="HATPase_MutL-MLH-PMS-like"/>
    <property type="match status" value="1"/>
</dbReference>
<dbReference type="CDD" id="cd00782">
    <property type="entry name" value="MutL_Trans"/>
    <property type="match status" value="1"/>
</dbReference>
<dbReference type="FunFam" id="3.30.565.10:FF:000003">
    <property type="entry name" value="DNA mismatch repair endonuclease MutL"/>
    <property type="match status" value="1"/>
</dbReference>
<dbReference type="Gene3D" id="3.30.230.10">
    <property type="match status" value="1"/>
</dbReference>
<dbReference type="Gene3D" id="3.30.565.10">
    <property type="entry name" value="Histidine kinase-like ATPase, C-terminal domain"/>
    <property type="match status" value="1"/>
</dbReference>
<dbReference type="Gene3D" id="3.30.1540.20">
    <property type="entry name" value="MutL, C-terminal domain, dimerisation subdomain"/>
    <property type="match status" value="1"/>
</dbReference>
<dbReference type="Gene3D" id="3.30.1370.100">
    <property type="entry name" value="MutL, C-terminal domain, regulatory subdomain"/>
    <property type="match status" value="1"/>
</dbReference>
<dbReference type="HAMAP" id="MF_00149">
    <property type="entry name" value="DNA_mis_repair"/>
    <property type="match status" value="1"/>
</dbReference>
<dbReference type="InterPro" id="IPR014762">
    <property type="entry name" value="DNA_mismatch_repair_CS"/>
</dbReference>
<dbReference type="InterPro" id="IPR020667">
    <property type="entry name" value="DNA_mismatch_repair_MutL"/>
</dbReference>
<dbReference type="InterPro" id="IPR013507">
    <property type="entry name" value="DNA_mismatch_S5_2-like"/>
</dbReference>
<dbReference type="InterPro" id="IPR036890">
    <property type="entry name" value="HATPase_C_sf"/>
</dbReference>
<dbReference type="InterPro" id="IPR002099">
    <property type="entry name" value="MutL/Mlh/PMS"/>
</dbReference>
<dbReference type="InterPro" id="IPR038973">
    <property type="entry name" value="MutL/Mlh/Pms-like"/>
</dbReference>
<dbReference type="InterPro" id="IPR014790">
    <property type="entry name" value="MutL_C"/>
</dbReference>
<dbReference type="InterPro" id="IPR042120">
    <property type="entry name" value="MutL_C_dimsub"/>
</dbReference>
<dbReference type="InterPro" id="IPR042121">
    <property type="entry name" value="MutL_C_regsub"/>
</dbReference>
<dbReference type="InterPro" id="IPR037198">
    <property type="entry name" value="MutL_C_sf"/>
</dbReference>
<dbReference type="InterPro" id="IPR020568">
    <property type="entry name" value="Ribosomal_Su5_D2-typ_SF"/>
</dbReference>
<dbReference type="InterPro" id="IPR014721">
    <property type="entry name" value="Ribsml_uS5_D2-typ_fold_subgr"/>
</dbReference>
<dbReference type="NCBIfam" id="TIGR00585">
    <property type="entry name" value="mutl"/>
    <property type="match status" value="1"/>
</dbReference>
<dbReference type="PANTHER" id="PTHR10073">
    <property type="entry name" value="DNA MISMATCH REPAIR PROTEIN MLH, PMS, MUTL"/>
    <property type="match status" value="1"/>
</dbReference>
<dbReference type="PANTHER" id="PTHR10073:SF12">
    <property type="entry name" value="DNA MISMATCH REPAIR PROTEIN MLH1"/>
    <property type="match status" value="1"/>
</dbReference>
<dbReference type="Pfam" id="PF01119">
    <property type="entry name" value="DNA_mis_repair"/>
    <property type="match status" value="1"/>
</dbReference>
<dbReference type="Pfam" id="PF13589">
    <property type="entry name" value="HATPase_c_3"/>
    <property type="match status" value="1"/>
</dbReference>
<dbReference type="Pfam" id="PF08676">
    <property type="entry name" value="MutL_C"/>
    <property type="match status" value="1"/>
</dbReference>
<dbReference type="SMART" id="SM01340">
    <property type="entry name" value="DNA_mis_repair"/>
    <property type="match status" value="1"/>
</dbReference>
<dbReference type="SMART" id="SM00853">
    <property type="entry name" value="MutL_C"/>
    <property type="match status" value="1"/>
</dbReference>
<dbReference type="SUPFAM" id="SSF55874">
    <property type="entry name" value="ATPase domain of HSP90 chaperone/DNA topoisomerase II/histidine kinase"/>
    <property type="match status" value="1"/>
</dbReference>
<dbReference type="SUPFAM" id="SSF118116">
    <property type="entry name" value="DNA mismatch repair protein MutL"/>
    <property type="match status" value="1"/>
</dbReference>
<dbReference type="SUPFAM" id="SSF54211">
    <property type="entry name" value="Ribosomal protein S5 domain 2-like"/>
    <property type="match status" value="1"/>
</dbReference>
<dbReference type="PROSITE" id="PS00058">
    <property type="entry name" value="DNA_MISMATCH_REPAIR_1"/>
    <property type="match status" value="1"/>
</dbReference>
<evidence type="ECO:0000255" key="1">
    <source>
        <dbReference type="HAMAP-Rule" id="MF_00149"/>
    </source>
</evidence>
<evidence type="ECO:0000256" key="2">
    <source>
        <dbReference type="SAM" id="MobiDB-lite"/>
    </source>
</evidence>
<organism>
    <name type="scientific">Agathobacter rectalis (strain ATCC 33656 / DSM 3377 / JCM 17463 / KCTC 5835 / VPI 0990)</name>
    <name type="common">Eubacterium rectale</name>
    <dbReference type="NCBI Taxonomy" id="515619"/>
    <lineage>
        <taxon>Bacteria</taxon>
        <taxon>Bacillati</taxon>
        <taxon>Bacillota</taxon>
        <taxon>Clostridia</taxon>
        <taxon>Lachnospirales</taxon>
        <taxon>Lachnospiraceae</taxon>
        <taxon>Agathobacter</taxon>
    </lineage>
</organism>
<protein>
    <recommendedName>
        <fullName evidence="1">DNA mismatch repair protein MutL</fullName>
    </recommendedName>
</protein>
<keyword id="KW-0227">DNA damage</keyword>
<keyword id="KW-0234">DNA repair</keyword>